<protein>
    <recommendedName>
        <fullName evidence="1">ATP synthase subunit c</fullName>
    </recommendedName>
    <alternativeName>
        <fullName evidence="1">ATP synthase F(0) sector subunit c</fullName>
    </alternativeName>
    <alternativeName>
        <fullName evidence="1">F-type ATPase subunit c</fullName>
        <shortName evidence="1">F-ATPase subunit c</shortName>
    </alternativeName>
    <alternativeName>
        <fullName evidence="1">Lipid-binding protein</fullName>
    </alternativeName>
</protein>
<gene>
    <name evidence="1" type="primary">atpE</name>
    <name type="ordered locus">BMQ_5153</name>
</gene>
<name>ATPL_PRIM1</name>
<evidence type="ECO:0000255" key="1">
    <source>
        <dbReference type="HAMAP-Rule" id="MF_01396"/>
    </source>
</evidence>
<comment type="function">
    <text evidence="1">F(1)F(0) ATP synthase produces ATP from ADP in the presence of a proton or sodium gradient. F-type ATPases consist of two structural domains, F(1) containing the extramembraneous catalytic core and F(0) containing the membrane proton channel, linked together by a central stalk and a peripheral stalk. During catalysis, ATP synthesis in the catalytic domain of F(1) is coupled via a rotary mechanism of the central stalk subunits to proton translocation.</text>
</comment>
<comment type="function">
    <text evidence="1">Key component of the F(0) channel; it plays a direct role in translocation across the membrane. A homomeric c-ring of between 10-14 subunits forms the central stalk rotor element with the F(1) delta and epsilon subunits.</text>
</comment>
<comment type="subunit">
    <text evidence="1">F-type ATPases have 2 components, F(1) - the catalytic core - and F(0) - the membrane proton channel. F(1) has five subunits: alpha(3), beta(3), gamma(1), delta(1), epsilon(1). F(0) has three main subunits: a(1), b(2) and c(10-14). The alpha and beta chains form an alternating ring which encloses part of the gamma chain. F(1) is attached to F(0) by a central stalk formed by the gamma and epsilon chains, while a peripheral stalk is formed by the delta and b chains.</text>
</comment>
<comment type="subcellular location">
    <subcellularLocation>
        <location evidence="1">Cell membrane</location>
        <topology evidence="1">Multi-pass membrane protein</topology>
    </subcellularLocation>
</comment>
<comment type="similarity">
    <text evidence="1">Belongs to the ATPase C chain family.</text>
</comment>
<accession>P20603</accession>
<accession>D5DWG6</accession>
<proteinExistence type="inferred from homology"/>
<keyword id="KW-0066">ATP synthesis</keyword>
<keyword id="KW-1003">Cell membrane</keyword>
<keyword id="KW-0138">CF(0)</keyword>
<keyword id="KW-0375">Hydrogen ion transport</keyword>
<keyword id="KW-0406">Ion transport</keyword>
<keyword id="KW-0446">Lipid-binding</keyword>
<keyword id="KW-0472">Membrane</keyword>
<keyword id="KW-1185">Reference proteome</keyword>
<keyword id="KW-0812">Transmembrane</keyword>
<keyword id="KW-1133">Transmembrane helix</keyword>
<keyword id="KW-0813">Transport</keyword>
<reference key="1">
    <citation type="journal article" date="1989" name="J. Biol. Chem.">
        <title>Organization and sequence of the genes coding for the proton-translocating ATPase of Bacillus megaterium.</title>
        <authorList>
            <person name="Brusilow W.S.A."/>
            <person name="Scarpetta M.A."/>
            <person name="Hawthorne C.A."/>
            <person name="Clark W.P."/>
        </authorList>
    </citation>
    <scope>NUCLEOTIDE SEQUENCE [GENOMIC DNA]</scope>
</reference>
<reference key="2">
    <citation type="journal article" date="2011" name="J. Bacteriol.">
        <title>Genome sequences of the biotechnologically important Bacillus megaterium strains QM B1551 and DSM319.</title>
        <authorList>
            <person name="Eppinger M."/>
            <person name="Bunk B."/>
            <person name="Johns M.A."/>
            <person name="Edirisinghe J.N."/>
            <person name="Kutumbaka K.K."/>
            <person name="Koenig S.S."/>
            <person name="Creasy H.H."/>
            <person name="Rosovitz M.J."/>
            <person name="Riley D.R."/>
            <person name="Daugherty S."/>
            <person name="Martin M."/>
            <person name="Elbourne L.D."/>
            <person name="Paulsen I."/>
            <person name="Biedendieck R."/>
            <person name="Braun C."/>
            <person name="Grayburn S."/>
            <person name="Dhingra S."/>
            <person name="Lukyanchuk V."/>
            <person name="Ball B."/>
            <person name="Ul-Qamar R."/>
            <person name="Seibel J."/>
            <person name="Bremer E."/>
            <person name="Jahn D."/>
            <person name="Ravel J."/>
            <person name="Vary P.S."/>
        </authorList>
    </citation>
    <scope>NUCLEOTIDE SEQUENCE [LARGE SCALE GENOMIC DNA]</scope>
    <source>
        <strain>ATCC 12872 / DSM 1804 / QMB1551</strain>
    </source>
</reference>
<sequence>MGLIASAIAIGLAALGAGIGNGLIVSKTIEGTARQPEARGTLTSMMFVGVALVEALPIIAVVIAFMVQGK</sequence>
<organism>
    <name type="scientific">Priestia megaterium (strain ATCC 12872 / QMB1551)</name>
    <name type="common">Bacillus megaterium</name>
    <dbReference type="NCBI Taxonomy" id="545693"/>
    <lineage>
        <taxon>Bacteria</taxon>
        <taxon>Bacillati</taxon>
        <taxon>Bacillota</taxon>
        <taxon>Bacilli</taxon>
        <taxon>Bacillales</taxon>
        <taxon>Bacillaceae</taxon>
        <taxon>Priestia</taxon>
    </lineage>
</organism>
<dbReference type="EMBL" id="M20255">
    <property type="protein sequence ID" value="AAA82521.1"/>
    <property type="molecule type" value="Genomic_DNA"/>
</dbReference>
<dbReference type="EMBL" id="CP001983">
    <property type="protein sequence ID" value="ADE72131.1"/>
    <property type="molecule type" value="Genomic_DNA"/>
</dbReference>
<dbReference type="PIR" id="C31482">
    <property type="entry name" value="C31482"/>
</dbReference>
<dbReference type="RefSeq" id="WP_013059804.1">
    <property type="nucleotide sequence ID" value="NC_014019.1"/>
</dbReference>
<dbReference type="SMR" id="P20603"/>
<dbReference type="STRING" id="545693.BMQ_5153"/>
<dbReference type="GeneID" id="93645613"/>
<dbReference type="KEGG" id="bmq:BMQ_5153"/>
<dbReference type="eggNOG" id="COG0636">
    <property type="taxonomic scope" value="Bacteria"/>
</dbReference>
<dbReference type="HOGENOM" id="CLU_148047_1_1_9"/>
<dbReference type="Proteomes" id="UP000000935">
    <property type="component" value="Chromosome"/>
</dbReference>
<dbReference type="GO" id="GO:0005886">
    <property type="term" value="C:plasma membrane"/>
    <property type="evidence" value="ECO:0007669"/>
    <property type="project" value="UniProtKB-SubCell"/>
</dbReference>
<dbReference type="GO" id="GO:0045259">
    <property type="term" value="C:proton-transporting ATP synthase complex"/>
    <property type="evidence" value="ECO:0007669"/>
    <property type="project" value="UniProtKB-KW"/>
</dbReference>
<dbReference type="GO" id="GO:0033177">
    <property type="term" value="C:proton-transporting two-sector ATPase complex, proton-transporting domain"/>
    <property type="evidence" value="ECO:0007669"/>
    <property type="project" value="InterPro"/>
</dbReference>
<dbReference type="GO" id="GO:0008289">
    <property type="term" value="F:lipid binding"/>
    <property type="evidence" value="ECO:0007669"/>
    <property type="project" value="UniProtKB-KW"/>
</dbReference>
<dbReference type="GO" id="GO:0046933">
    <property type="term" value="F:proton-transporting ATP synthase activity, rotational mechanism"/>
    <property type="evidence" value="ECO:0007669"/>
    <property type="project" value="UniProtKB-UniRule"/>
</dbReference>
<dbReference type="CDD" id="cd18185">
    <property type="entry name" value="ATP-synt_Fo_c_ATPE"/>
    <property type="match status" value="1"/>
</dbReference>
<dbReference type="FunFam" id="1.20.20.10:FF:000004">
    <property type="entry name" value="ATP synthase subunit c"/>
    <property type="match status" value="1"/>
</dbReference>
<dbReference type="Gene3D" id="1.20.20.10">
    <property type="entry name" value="F1F0 ATP synthase subunit C"/>
    <property type="match status" value="1"/>
</dbReference>
<dbReference type="HAMAP" id="MF_01396">
    <property type="entry name" value="ATP_synth_c_bact"/>
    <property type="match status" value="1"/>
</dbReference>
<dbReference type="InterPro" id="IPR005953">
    <property type="entry name" value="ATP_synth_csu_bac/chlpt"/>
</dbReference>
<dbReference type="InterPro" id="IPR000454">
    <property type="entry name" value="ATP_synth_F0_csu"/>
</dbReference>
<dbReference type="InterPro" id="IPR020537">
    <property type="entry name" value="ATP_synth_F0_csu_DDCD_BS"/>
</dbReference>
<dbReference type="InterPro" id="IPR038662">
    <property type="entry name" value="ATP_synth_F0_csu_sf"/>
</dbReference>
<dbReference type="InterPro" id="IPR002379">
    <property type="entry name" value="ATPase_proteolipid_c-like_dom"/>
</dbReference>
<dbReference type="InterPro" id="IPR035921">
    <property type="entry name" value="F/V-ATP_Csub_sf"/>
</dbReference>
<dbReference type="NCBIfam" id="TIGR01260">
    <property type="entry name" value="ATP_synt_c"/>
    <property type="match status" value="1"/>
</dbReference>
<dbReference type="NCBIfam" id="NF005363">
    <property type="entry name" value="PRK06876.1"/>
    <property type="match status" value="1"/>
</dbReference>
<dbReference type="PANTHER" id="PTHR10031">
    <property type="entry name" value="ATP SYNTHASE LIPID-BINDING PROTEIN, MITOCHONDRIAL"/>
    <property type="match status" value="1"/>
</dbReference>
<dbReference type="PANTHER" id="PTHR10031:SF0">
    <property type="entry name" value="ATPASE PROTEIN 9"/>
    <property type="match status" value="1"/>
</dbReference>
<dbReference type="Pfam" id="PF00137">
    <property type="entry name" value="ATP-synt_C"/>
    <property type="match status" value="1"/>
</dbReference>
<dbReference type="PRINTS" id="PR00124">
    <property type="entry name" value="ATPASEC"/>
</dbReference>
<dbReference type="SUPFAM" id="SSF81333">
    <property type="entry name" value="F1F0 ATP synthase subunit C"/>
    <property type="match status" value="1"/>
</dbReference>
<dbReference type="PROSITE" id="PS00605">
    <property type="entry name" value="ATPASE_C"/>
    <property type="match status" value="1"/>
</dbReference>
<feature type="chain" id="PRO_0000112136" description="ATP synthase subunit c">
    <location>
        <begin position="1"/>
        <end position="70"/>
    </location>
</feature>
<feature type="transmembrane region" description="Helical" evidence="1">
    <location>
        <begin position="4"/>
        <end position="24"/>
    </location>
</feature>
<feature type="transmembrane region" description="Helical" evidence="1">
    <location>
        <begin position="47"/>
        <end position="67"/>
    </location>
</feature>
<feature type="site" description="Reversibly protonated during proton transport" evidence="1">
    <location>
        <position position="54"/>
    </location>
</feature>